<accession>Q5LUE3</accession>
<organism>
    <name type="scientific">Ruegeria pomeroyi (strain ATCC 700808 / DSM 15171 / DSS-3)</name>
    <name type="common">Silicibacter pomeroyi</name>
    <dbReference type="NCBI Taxonomy" id="246200"/>
    <lineage>
        <taxon>Bacteria</taxon>
        <taxon>Pseudomonadati</taxon>
        <taxon>Pseudomonadota</taxon>
        <taxon>Alphaproteobacteria</taxon>
        <taxon>Rhodobacterales</taxon>
        <taxon>Roseobacteraceae</taxon>
        <taxon>Ruegeria</taxon>
    </lineage>
</organism>
<feature type="chain" id="PRO_0000379865" description="Putative hydro-lyase SPO1111">
    <location>
        <begin position="1"/>
        <end position="275"/>
    </location>
</feature>
<evidence type="ECO:0000255" key="1">
    <source>
        <dbReference type="HAMAP-Rule" id="MF_01830"/>
    </source>
</evidence>
<sequence>MSVGYDRLKTSSLAELRAAIRSGAYRSHTAGLGQGYLQANLAILPEAYALDFMRYCQRNPKPCPLIGVSDTGNPMMFTLGRDIDIRTDVPAYNVYRDGRLDSVSADITEDWRDDLVVFALGCSFTFEHAVMRAGVALWHVDNDRTVPMFRSNIETVPAGPFSGKMVVSMRAVPEDRVAEVAEISRAYPLAHGAPVYWGDPAGLGIADIMSPDWGDPAPLGPGEVPMFWACGVTPQVAIEAARLPLCITHKPGHMLITDVAEDAEVPVVETAQDKR</sequence>
<name>Y1111_RUEPO</name>
<proteinExistence type="inferred from homology"/>
<comment type="similarity">
    <text evidence="1">Belongs to the D-glutamate cyclase family.</text>
</comment>
<gene>
    <name type="ordered locus">SPO1111</name>
</gene>
<keyword id="KW-0456">Lyase</keyword>
<keyword id="KW-1185">Reference proteome</keyword>
<reference key="1">
    <citation type="journal article" date="2004" name="Nature">
        <title>Genome sequence of Silicibacter pomeroyi reveals adaptations to the marine environment.</title>
        <authorList>
            <person name="Moran M.A."/>
            <person name="Buchan A."/>
            <person name="Gonzalez J.M."/>
            <person name="Heidelberg J.F."/>
            <person name="Whitman W.B."/>
            <person name="Kiene R.P."/>
            <person name="Henriksen J.R."/>
            <person name="King G.M."/>
            <person name="Belas R."/>
            <person name="Fuqua C."/>
            <person name="Brinkac L.M."/>
            <person name="Lewis M."/>
            <person name="Johri S."/>
            <person name="Weaver B."/>
            <person name="Pai G."/>
            <person name="Eisen J.A."/>
            <person name="Rahe E."/>
            <person name="Sheldon W.M."/>
            <person name="Ye W."/>
            <person name="Miller T.R."/>
            <person name="Carlton J."/>
            <person name="Rasko D.A."/>
            <person name="Paulsen I.T."/>
            <person name="Ren Q."/>
            <person name="Daugherty S.C."/>
            <person name="DeBoy R.T."/>
            <person name="Dodson R.J."/>
            <person name="Durkin A.S."/>
            <person name="Madupu R."/>
            <person name="Nelson W.C."/>
            <person name="Sullivan S.A."/>
            <person name="Rosovitz M.J."/>
            <person name="Haft D.H."/>
            <person name="Selengut J."/>
            <person name="Ward N."/>
        </authorList>
    </citation>
    <scope>NUCLEOTIDE SEQUENCE [LARGE SCALE GENOMIC DNA]</scope>
    <source>
        <strain>ATCC 700808 / DSM 15171 / DSS-3</strain>
    </source>
</reference>
<reference key="2">
    <citation type="journal article" date="2014" name="Stand. Genomic Sci.">
        <title>An updated genome annotation for the model marine bacterium Ruegeria pomeroyi DSS-3.</title>
        <authorList>
            <person name="Rivers A.R."/>
            <person name="Smith C.B."/>
            <person name="Moran M.A."/>
        </authorList>
    </citation>
    <scope>GENOME REANNOTATION</scope>
    <source>
        <strain>ATCC 700808 / DSM 15171 / DSS-3</strain>
    </source>
</reference>
<dbReference type="EC" id="4.2.1.-" evidence="1"/>
<dbReference type="EMBL" id="CP000031">
    <property type="protein sequence ID" value="AAV94411.1"/>
    <property type="molecule type" value="Genomic_DNA"/>
</dbReference>
<dbReference type="RefSeq" id="WP_011046858.1">
    <property type="nucleotide sequence ID" value="NC_003911.12"/>
</dbReference>
<dbReference type="SMR" id="Q5LUE3"/>
<dbReference type="STRING" id="246200.SPO1111"/>
<dbReference type="PaxDb" id="246200-SPO1111"/>
<dbReference type="KEGG" id="sil:SPO1111"/>
<dbReference type="eggNOG" id="COG4336">
    <property type="taxonomic scope" value="Bacteria"/>
</dbReference>
<dbReference type="HOGENOM" id="CLU_059759_0_0_5"/>
<dbReference type="OrthoDB" id="149585at2"/>
<dbReference type="Proteomes" id="UP000001023">
    <property type="component" value="Chromosome"/>
</dbReference>
<dbReference type="GO" id="GO:0047820">
    <property type="term" value="F:D-glutamate cyclase activity"/>
    <property type="evidence" value="ECO:0007669"/>
    <property type="project" value="TreeGrafter"/>
</dbReference>
<dbReference type="GO" id="GO:0006536">
    <property type="term" value="P:glutamate metabolic process"/>
    <property type="evidence" value="ECO:0007669"/>
    <property type="project" value="TreeGrafter"/>
</dbReference>
<dbReference type="FunFam" id="3.30.2040.10:FF:000001">
    <property type="entry name" value="D-glutamate cyclase, mitochondrial"/>
    <property type="match status" value="1"/>
</dbReference>
<dbReference type="Gene3D" id="3.40.1640.10">
    <property type="entry name" value="PSTPO5379-like"/>
    <property type="match status" value="1"/>
</dbReference>
<dbReference type="Gene3D" id="3.30.2040.10">
    <property type="entry name" value="PSTPO5379-like domain"/>
    <property type="match status" value="1"/>
</dbReference>
<dbReference type="HAMAP" id="MF_01830">
    <property type="entry name" value="Hydro_lyase"/>
    <property type="match status" value="1"/>
</dbReference>
<dbReference type="InterPro" id="IPR009906">
    <property type="entry name" value="D-Glu_cyclase"/>
</dbReference>
<dbReference type="InterPro" id="IPR038021">
    <property type="entry name" value="Putative_hydro-lyase"/>
</dbReference>
<dbReference type="InterPro" id="IPR016938">
    <property type="entry name" value="UPF0317"/>
</dbReference>
<dbReference type="NCBIfam" id="NF003969">
    <property type="entry name" value="PRK05463.1"/>
    <property type="match status" value="1"/>
</dbReference>
<dbReference type="PANTHER" id="PTHR32022">
    <property type="entry name" value="D-GLUTAMATE CYCLASE, MITOCHONDRIAL"/>
    <property type="match status" value="1"/>
</dbReference>
<dbReference type="PANTHER" id="PTHR32022:SF10">
    <property type="entry name" value="D-GLUTAMATE CYCLASE, MITOCHONDRIAL"/>
    <property type="match status" value="1"/>
</dbReference>
<dbReference type="Pfam" id="PF07286">
    <property type="entry name" value="D-Glu_cyclase"/>
    <property type="match status" value="1"/>
</dbReference>
<dbReference type="PIRSF" id="PIRSF029755">
    <property type="entry name" value="UCP029755"/>
    <property type="match status" value="1"/>
</dbReference>
<dbReference type="SUPFAM" id="SSF160920">
    <property type="entry name" value="PSTPO5379-like"/>
    <property type="match status" value="1"/>
</dbReference>
<protein>
    <recommendedName>
        <fullName evidence="1">Putative hydro-lyase SPO1111</fullName>
        <ecNumber evidence="1">4.2.1.-</ecNumber>
    </recommendedName>
</protein>